<keyword id="KW-0067">ATP-binding</keyword>
<keyword id="KW-0150">Chloroplast</keyword>
<keyword id="KW-0547">Nucleotide-binding</keyword>
<keyword id="KW-0934">Plastid</keyword>
<keyword id="KW-0691">RNA editing</keyword>
<organism>
    <name type="scientific">Adiantum capillus-veneris</name>
    <name type="common">Maidenhair fern</name>
    <dbReference type="NCBI Taxonomy" id="13818"/>
    <lineage>
        <taxon>Eukaryota</taxon>
        <taxon>Viridiplantae</taxon>
        <taxon>Streptophyta</taxon>
        <taxon>Embryophyta</taxon>
        <taxon>Tracheophyta</taxon>
        <taxon>Polypodiopsida</taxon>
        <taxon>Polypodiidae</taxon>
        <taxon>Polypodiales</taxon>
        <taxon>Pteridineae</taxon>
        <taxon>Pteridaceae</taxon>
        <taxon>Vittarioideae</taxon>
        <taxon>Adiantum</taxon>
    </lineage>
</organism>
<sequence>MVKKVIEKGRGVRGRDYSSKVWDFLEIDALNYFSESLKNHYLEELVVSPASTAEPFIRLSDLRFLSLLFLRNLRHSIMRGSGVTLEMLMLLAIPIFMHCLSYKNSIDRGFVLAKVIDGGEGIRKKQTENYGNFSYDCFLQFKRFLSVGRDGKREILEPYYLGLNKDISISASSSKEEREIRYDVTTPLPSGRWKARIMRRDSLLFGGDRFKGKTEGIQVVRGGRYLQDLVRFFKFYKNLVVSKNGSDCHQNNFDSLLLREICDKQDLGRLQAIRLGNNSLSSVVLYPFESESADSADPRRDGSAFPSEQEVFSNLYSFTSREKTILFRNSISGLDYGEDEGGFPVLHAYSQVRNQLINRLTNFLSIIRKSNLPLGGKIVIDVSNRIKSERVFFPSGMKKNMPFTKISGKKLRLASGGYFDFVEIFPTYFKASLEIPRETTNQNGNTNFLDELEGGGNLDSIYSLVRLYGRNRIIPLYSTYIFLLHDYFCALSTEYFFRIKYWLDGWTGGRVYISFTGIATEETVFKWKDDVERLSNEYVTSHIGQCRNVQSNLYRRLDATRNLYVSPVKKFLGEAMKYNLAELICRVSLVGNELLNKTGVSLRSTNRHTKKYFHRFLDVLFLSKMIVAEATRQKILIDTVDYCIEKLDDIDFEKLNKMDRIELDFFSSLSDGYIDEEILLFKTILEERKSFLVESRLLTSEKSVGSSTALKPASNFTSLGLSCIEAIRAGFSGEALSIMGRQNWNLFVCDLSRGGNSIRNIGESLPKNISDQMDEINNSPIRSRAGNNFIQRIKRGFFVGNCSNSYLDVLENFYLSSDEKAISSSDILSLIHLQLSDSLSSNFSKQTAGEVADHLLTPIQLISPNLHESATIVTHLDGLPNSISDLNGLLASLSSSPREATDSFLFSCSNDGVSLEEASRNSDSWSDHQRTQPRRNLLVLDRVNSEKFFKDGLDSRNGSPTSQVYRNGLSIEYFWEPKKLDTPYWSLRFSLFNGVTSRFIAGSIGEDVTRQDAGFADSSAREEATCPSHFINFNELSEDLNRYKISWIFWRDSIGENWSLLGDYIPLFFTPTWWRYFCDLITKAYPEIVLKISYDSNHDLRRISEGIARGLVGSAKGYLLRSLQRLGLIFGNNSINTISSETDLLILEKIPDKAEILHPGEWSVSQFSNRPISYCCILSILLVLLSLKHPLSAVSGSNFFHLWKRFATIDYLTDPMRGSYLRKVMYSPPTSQMLTRDLLIHSLNRFLNCVSNILFFLFVKNEIDSWIFRRESSDILDSNKELLTQHLVTTKILYRYASKSKFNYDLSSNKIFHEPYPQDRSNVLAYLLQFWQNDLLGHKIRKLDPAEKWAFSALGRDILFSATTRRRDSLLNMPCRDIPISLQSGLLPSKGILLVGPVETGRSSLIRDVASNSYFPVVKLPLKKFIYNRSFFNNVRGNFISKESVHRLNIVFEIAKEMSPCTLWIQDIHELNICRSYNKLEADPKFLLCQILKSIGHKLGNSDIRENVVIATTHVPARIDPALVAPNRLNQLINFRRSNGRQRQKELSILLRIKGFEVGANPTLLESTVSGTAGYSKRDLLLLANEALLIGTSKGRKFVCSNTIGLALHRQHSTVSDMGNEMESNSEWEISSYKMAEVKNSLTDISLTTFPFIGRDELKMRFYYLSNWYVEPSTTESTIDEFTMFLHLPELIAKLVARDSFQMDRGKEDNFIVIDKLVENDLNLACGVLENLSNNFPRPEICRGESRRSNSFPPPLPIGKPKYCSGVTSLSRSSKSLKRGRISSLTDFEMQQSPELRNSAAEISREITWSRKAWRLRFLRSGTYELMGVLSEPNHLYNLILLYYNQNYIPQQDFEFSKIRGKRSKWREKSGYLFSFEKSVTNGTDNSIKRLENRLDNMLLREQFLELGISGDSSNEYETHCDRLNEMTRLFGGRFIWDPMLLFQPDPNIPSLRRNLLSTKELARRLHTIYGMRRQRLQKMSNNKIKDFFLYSEENPKLKPDSSLNRRNNLPLEEEERDSEYVRETSSVDIHLQYPQIFTPVRLGCYAVAEDFPERFLRFRLLVHRNKWLRRNRSPFRDFLIYNMLLETYEYLSNPFRFGKASLD</sequence>
<feature type="chain" id="PRO_0000223046" description="Protein Ycf2">
    <location>
        <begin position="1"/>
        <end position="2104"/>
    </location>
</feature>
<feature type="binding site" evidence="2">
    <location>
        <begin position="1396"/>
        <end position="1403"/>
    </location>
    <ligand>
        <name>ATP</name>
        <dbReference type="ChEBI" id="CHEBI:30616"/>
    </ligand>
</feature>
<comment type="function">
    <text>Probable ATPase of unknown function. Its presence in a non-photosynthetic plant (Epifagus virginiana) and experiments in tobacco indicate that it has an essential function which is probably not related to photosynthesis.</text>
</comment>
<comment type="subcellular location">
    <subcellularLocation>
        <location evidence="1">Plastid</location>
        <location evidence="1">Chloroplast stroma</location>
    </subcellularLocation>
</comment>
<comment type="RNA editing">
    <location>
        <position position="63" evidence="3"/>
    </location>
    <location>
        <position position="1199" evidence="3"/>
    </location>
    <location>
        <position position="1232" evidence="3"/>
    </location>
    <location>
        <position position="1523" evidence="3"/>
    </location>
    <location>
        <position position="1531" evidence="3"/>
    </location>
    <text>The nonsense codons at positions 63, 1232 and 1531 are edited to sense codons.</text>
</comment>
<comment type="similarity">
    <text evidence="4">Belongs to the Ycf2 family.</text>
</comment>
<dbReference type="EMBL" id="AY178864">
    <property type="protein sequence ID" value="AAP29436.2"/>
    <property type="molecule type" value="Genomic_DNA"/>
</dbReference>
<dbReference type="EMBL" id="AY178864">
    <property type="protein sequence ID" value="AAP29454.2"/>
    <property type="molecule type" value="Genomic_DNA"/>
</dbReference>
<dbReference type="GO" id="GO:0009570">
    <property type="term" value="C:chloroplast stroma"/>
    <property type="evidence" value="ECO:0007669"/>
    <property type="project" value="UniProtKB-SubCell"/>
</dbReference>
<dbReference type="GO" id="GO:0005524">
    <property type="term" value="F:ATP binding"/>
    <property type="evidence" value="ECO:0007669"/>
    <property type="project" value="UniProtKB-KW"/>
</dbReference>
<dbReference type="GO" id="GO:0016887">
    <property type="term" value="F:ATP hydrolysis activity"/>
    <property type="evidence" value="ECO:0007669"/>
    <property type="project" value="InterPro"/>
</dbReference>
<dbReference type="CDD" id="cd19505">
    <property type="entry name" value="RecA-like_Ycf2"/>
    <property type="match status" value="1"/>
</dbReference>
<dbReference type="Gene3D" id="1.10.8.60">
    <property type="match status" value="1"/>
</dbReference>
<dbReference type="Gene3D" id="3.40.50.300">
    <property type="entry name" value="P-loop containing nucleotide triphosphate hydrolases"/>
    <property type="match status" value="1"/>
</dbReference>
<dbReference type="InterPro" id="IPR003593">
    <property type="entry name" value="AAA+_ATPase"/>
</dbReference>
<dbReference type="InterPro" id="IPR050168">
    <property type="entry name" value="AAA_ATPase_domain"/>
</dbReference>
<dbReference type="InterPro" id="IPR003959">
    <property type="entry name" value="ATPase_AAA_core"/>
</dbReference>
<dbReference type="InterPro" id="IPR027417">
    <property type="entry name" value="P-loop_NTPase"/>
</dbReference>
<dbReference type="PANTHER" id="PTHR23077">
    <property type="entry name" value="AAA-FAMILY ATPASE"/>
    <property type="match status" value="1"/>
</dbReference>
<dbReference type="PANTHER" id="PTHR23077:SF171">
    <property type="entry name" value="NUCLEAR VALOSIN-CONTAINING PROTEIN-LIKE"/>
    <property type="match status" value="1"/>
</dbReference>
<dbReference type="Pfam" id="PF00004">
    <property type="entry name" value="AAA"/>
    <property type="match status" value="1"/>
</dbReference>
<dbReference type="SMART" id="SM00382">
    <property type="entry name" value="AAA"/>
    <property type="match status" value="1"/>
</dbReference>
<dbReference type="SUPFAM" id="SSF52540">
    <property type="entry name" value="P-loop containing nucleoside triphosphate hydrolases"/>
    <property type="match status" value="1"/>
</dbReference>
<reference key="1">
    <citation type="journal article" date="2003" name="DNA Res.">
        <title>Complete nucleotide sequence of the chloroplast genome from a leptosporangiate fern, Adiantum capillus-veneris L.</title>
        <authorList>
            <person name="Wolf P.G."/>
            <person name="Rowe C.A."/>
            <person name="Sinclair R.B."/>
            <person name="Hasebe M."/>
        </authorList>
    </citation>
    <scope>NUCLEOTIDE SEQUENCE [LARGE SCALE GENOMIC DNA]</scope>
</reference>
<reference key="2">
    <citation type="journal article" date="2004" name="Gene">
        <title>High levels of RNA editing in a vascular plant chloroplast genome: analysis of transcripts from the fern Adiantum capillus-veneris.</title>
        <authorList>
            <person name="Wolf P.G."/>
            <person name="Rowe C.A."/>
            <person name="Hasebe M."/>
        </authorList>
    </citation>
    <scope>NUCLEOTIDE SEQUENCE [GENOMIC DNA]</scope>
    <scope>RNA EDITING</scope>
</reference>
<name>YCF2_ADICA</name>
<gene>
    <name type="primary">ycf2-A</name>
</gene>
<gene>
    <name type="primary">ycf2-B</name>
</gene>
<evidence type="ECO:0000250" key="1"/>
<evidence type="ECO:0000255" key="2"/>
<evidence type="ECO:0000269" key="3">
    <source>
    </source>
</evidence>
<evidence type="ECO:0000305" key="4"/>
<protein>
    <recommendedName>
        <fullName>Protein Ycf2</fullName>
    </recommendedName>
</protein>
<proteinExistence type="evidence at transcript level"/>
<accession>Q85B60</accession>
<geneLocation type="chloroplast"/>